<sequence>MADTDPGYPRSSIEDDFNYGSCVASASVHIRMAFLRKVYSILSLQVLLTTVTSALFLYFQALRTFVHESPALIVVFALGSLGLIFALTLHRHTHPLNLYLLFAFTLSESLAVAAVVTFYDVYLVLQAFIMTTAVFLGLTAYTLQSKRDFTKFGAGLFAGLWILCLAGFLKLFFYSETMELVLASLGALLFCGFIIYDTHSLMHRLSPEEYVIAAISLYMDIINLFLHLLKFLEAVNKK</sequence>
<evidence type="ECO:0000250" key="1"/>
<evidence type="ECO:0000255" key="2"/>
<evidence type="ECO:0000305" key="3"/>
<comment type="function">
    <text evidence="1">Anti-apoptotic protein which can inhibit apoptosis induced by intrinsic and extrinsic apoptotic stimuli. Can modulate both capacitative Ca2+ entry and inositol 1,4,5-trisphosphate (IP3)-mediated Ca2+ release (By similarity).</text>
</comment>
<comment type="subunit">
    <text evidence="1">Interacts with ITPR3.</text>
</comment>
<comment type="subcellular location">
    <subcellularLocation>
        <location>Golgi apparatus membrane</location>
        <topology>Multi-pass membrane protein</topology>
    </subcellularLocation>
</comment>
<comment type="similarity">
    <text evidence="3">Belongs to the BI1 family. LFG subfamily.</text>
</comment>
<protein>
    <recommendedName>
        <fullName>Protein lifeguard 4</fullName>
    </recommendedName>
    <alternativeName>
        <fullName>Transmembrane BAX inhibitor motif-containing protein 4</fullName>
    </alternativeName>
    <alternativeName>
        <fullName>Z-protein</fullName>
    </alternativeName>
</protein>
<keyword id="KW-0053">Apoptosis</keyword>
<keyword id="KW-0333">Golgi apparatus</keyword>
<keyword id="KW-0472">Membrane</keyword>
<keyword id="KW-1185">Reference proteome</keyword>
<keyword id="KW-0812">Transmembrane</keyword>
<keyword id="KW-1133">Transmembrane helix</keyword>
<gene>
    <name type="primary">Tmbim4</name>
    <name type="synonym">Lfg4</name>
</gene>
<feature type="chain" id="PRO_0000179093" description="Protein lifeguard 4">
    <location>
        <begin position="1"/>
        <end position="238"/>
    </location>
</feature>
<feature type="topological domain" description="Cytoplasmic" evidence="2">
    <location>
        <begin position="1"/>
        <end position="38"/>
    </location>
</feature>
<feature type="transmembrane region" description="Helical" evidence="2">
    <location>
        <begin position="39"/>
        <end position="59"/>
    </location>
</feature>
<feature type="topological domain" description="Lumenal" evidence="2">
    <location>
        <begin position="60"/>
        <end position="68"/>
    </location>
</feature>
<feature type="transmembrane region" description="Helical" evidence="2">
    <location>
        <begin position="69"/>
        <end position="89"/>
    </location>
</feature>
<feature type="topological domain" description="Cytoplasmic" evidence="2">
    <location>
        <begin position="90"/>
        <end position="97"/>
    </location>
</feature>
<feature type="transmembrane region" description="Helical" evidence="2">
    <location>
        <begin position="98"/>
        <end position="118"/>
    </location>
</feature>
<feature type="topological domain" description="Lumenal" evidence="2">
    <location>
        <begin position="119"/>
        <end position="120"/>
    </location>
</feature>
<feature type="transmembrane region" description="Helical" evidence="2">
    <location>
        <begin position="121"/>
        <end position="141"/>
    </location>
</feature>
<feature type="topological domain" description="Cytoplasmic" evidence="2">
    <location>
        <begin position="142"/>
        <end position="151"/>
    </location>
</feature>
<feature type="transmembrane region" description="Helical" evidence="2">
    <location>
        <begin position="152"/>
        <end position="172"/>
    </location>
</feature>
<feature type="topological domain" description="Lumenal" evidence="2">
    <location>
        <begin position="173"/>
        <end position="175"/>
    </location>
</feature>
<feature type="transmembrane region" description="Helical" evidence="2">
    <location>
        <begin position="176"/>
        <end position="196"/>
    </location>
</feature>
<feature type="topological domain" description="Cytoplasmic" evidence="2">
    <location>
        <begin position="197"/>
        <end position="208"/>
    </location>
</feature>
<feature type="intramembrane region" description="Helical" evidence="2">
    <location>
        <begin position="209"/>
        <end position="229"/>
    </location>
</feature>
<feature type="topological domain" description="Cytoplasmic" evidence="2">
    <location>
        <begin position="230"/>
        <end position="238"/>
    </location>
</feature>
<name>LFG4_MOUSE</name>
<accession>Q9DA39</accession>
<proteinExistence type="evidence at transcript level"/>
<reference key="1">
    <citation type="journal article" date="2005" name="Science">
        <title>The transcriptional landscape of the mammalian genome.</title>
        <authorList>
            <person name="Carninci P."/>
            <person name="Kasukawa T."/>
            <person name="Katayama S."/>
            <person name="Gough J."/>
            <person name="Frith M.C."/>
            <person name="Maeda N."/>
            <person name="Oyama R."/>
            <person name="Ravasi T."/>
            <person name="Lenhard B."/>
            <person name="Wells C."/>
            <person name="Kodzius R."/>
            <person name="Shimokawa K."/>
            <person name="Bajic V.B."/>
            <person name="Brenner S.E."/>
            <person name="Batalov S."/>
            <person name="Forrest A.R."/>
            <person name="Zavolan M."/>
            <person name="Davis M.J."/>
            <person name="Wilming L.G."/>
            <person name="Aidinis V."/>
            <person name="Allen J.E."/>
            <person name="Ambesi-Impiombato A."/>
            <person name="Apweiler R."/>
            <person name="Aturaliya R.N."/>
            <person name="Bailey T.L."/>
            <person name="Bansal M."/>
            <person name="Baxter L."/>
            <person name="Beisel K.W."/>
            <person name="Bersano T."/>
            <person name="Bono H."/>
            <person name="Chalk A.M."/>
            <person name="Chiu K.P."/>
            <person name="Choudhary V."/>
            <person name="Christoffels A."/>
            <person name="Clutterbuck D.R."/>
            <person name="Crowe M.L."/>
            <person name="Dalla E."/>
            <person name="Dalrymple B.P."/>
            <person name="de Bono B."/>
            <person name="Della Gatta G."/>
            <person name="di Bernardo D."/>
            <person name="Down T."/>
            <person name="Engstrom P."/>
            <person name="Fagiolini M."/>
            <person name="Faulkner G."/>
            <person name="Fletcher C.F."/>
            <person name="Fukushima T."/>
            <person name="Furuno M."/>
            <person name="Futaki S."/>
            <person name="Gariboldi M."/>
            <person name="Georgii-Hemming P."/>
            <person name="Gingeras T.R."/>
            <person name="Gojobori T."/>
            <person name="Green R.E."/>
            <person name="Gustincich S."/>
            <person name="Harbers M."/>
            <person name="Hayashi Y."/>
            <person name="Hensch T.K."/>
            <person name="Hirokawa N."/>
            <person name="Hill D."/>
            <person name="Huminiecki L."/>
            <person name="Iacono M."/>
            <person name="Ikeo K."/>
            <person name="Iwama A."/>
            <person name="Ishikawa T."/>
            <person name="Jakt M."/>
            <person name="Kanapin A."/>
            <person name="Katoh M."/>
            <person name="Kawasawa Y."/>
            <person name="Kelso J."/>
            <person name="Kitamura H."/>
            <person name="Kitano H."/>
            <person name="Kollias G."/>
            <person name="Krishnan S.P."/>
            <person name="Kruger A."/>
            <person name="Kummerfeld S.K."/>
            <person name="Kurochkin I.V."/>
            <person name="Lareau L.F."/>
            <person name="Lazarevic D."/>
            <person name="Lipovich L."/>
            <person name="Liu J."/>
            <person name="Liuni S."/>
            <person name="McWilliam S."/>
            <person name="Madan Babu M."/>
            <person name="Madera M."/>
            <person name="Marchionni L."/>
            <person name="Matsuda H."/>
            <person name="Matsuzawa S."/>
            <person name="Miki H."/>
            <person name="Mignone F."/>
            <person name="Miyake S."/>
            <person name="Morris K."/>
            <person name="Mottagui-Tabar S."/>
            <person name="Mulder N."/>
            <person name="Nakano N."/>
            <person name="Nakauchi H."/>
            <person name="Ng P."/>
            <person name="Nilsson R."/>
            <person name="Nishiguchi S."/>
            <person name="Nishikawa S."/>
            <person name="Nori F."/>
            <person name="Ohara O."/>
            <person name="Okazaki Y."/>
            <person name="Orlando V."/>
            <person name="Pang K.C."/>
            <person name="Pavan W.J."/>
            <person name="Pavesi G."/>
            <person name="Pesole G."/>
            <person name="Petrovsky N."/>
            <person name="Piazza S."/>
            <person name="Reed J."/>
            <person name="Reid J.F."/>
            <person name="Ring B.Z."/>
            <person name="Ringwald M."/>
            <person name="Rost B."/>
            <person name="Ruan Y."/>
            <person name="Salzberg S.L."/>
            <person name="Sandelin A."/>
            <person name="Schneider C."/>
            <person name="Schoenbach C."/>
            <person name="Sekiguchi K."/>
            <person name="Semple C.A."/>
            <person name="Seno S."/>
            <person name="Sessa L."/>
            <person name="Sheng Y."/>
            <person name="Shibata Y."/>
            <person name="Shimada H."/>
            <person name="Shimada K."/>
            <person name="Silva D."/>
            <person name="Sinclair B."/>
            <person name="Sperling S."/>
            <person name="Stupka E."/>
            <person name="Sugiura K."/>
            <person name="Sultana R."/>
            <person name="Takenaka Y."/>
            <person name="Taki K."/>
            <person name="Tammoja K."/>
            <person name="Tan S.L."/>
            <person name="Tang S."/>
            <person name="Taylor M.S."/>
            <person name="Tegner J."/>
            <person name="Teichmann S.A."/>
            <person name="Ueda H.R."/>
            <person name="van Nimwegen E."/>
            <person name="Verardo R."/>
            <person name="Wei C.L."/>
            <person name="Yagi K."/>
            <person name="Yamanishi H."/>
            <person name="Zabarovsky E."/>
            <person name="Zhu S."/>
            <person name="Zimmer A."/>
            <person name="Hide W."/>
            <person name="Bult C."/>
            <person name="Grimmond S.M."/>
            <person name="Teasdale R.D."/>
            <person name="Liu E.T."/>
            <person name="Brusic V."/>
            <person name="Quackenbush J."/>
            <person name="Wahlestedt C."/>
            <person name="Mattick J.S."/>
            <person name="Hume D.A."/>
            <person name="Kai C."/>
            <person name="Sasaki D."/>
            <person name="Tomaru Y."/>
            <person name="Fukuda S."/>
            <person name="Kanamori-Katayama M."/>
            <person name="Suzuki M."/>
            <person name="Aoki J."/>
            <person name="Arakawa T."/>
            <person name="Iida J."/>
            <person name="Imamura K."/>
            <person name="Itoh M."/>
            <person name="Kato T."/>
            <person name="Kawaji H."/>
            <person name="Kawagashira N."/>
            <person name="Kawashima T."/>
            <person name="Kojima M."/>
            <person name="Kondo S."/>
            <person name="Konno H."/>
            <person name="Nakano K."/>
            <person name="Ninomiya N."/>
            <person name="Nishio T."/>
            <person name="Okada M."/>
            <person name="Plessy C."/>
            <person name="Shibata K."/>
            <person name="Shiraki T."/>
            <person name="Suzuki S."/>
            <person name="Tagami M."/>
            <person name="Waki K."/>
            <person name="Watahiki A."/>
            <person name="Okamura-Oho Y."/>
            <person name="Suzuki H."/>
            <person name="Kawai J."/>
            <person name="Hayashizaki Y."/>
        </authorList>
    </citation>
    <scope>NUCLEOTIDE SEQUENCE [LARGE SCALE MRNA]</scope>
    <source>
        <strain>C57BL/6J</strain>
        <tissue>Testis</tissue>
    </source>
</reference>
<reference key="2">
    <citation type="journal article" date="2009" name="Apoptosis">
        <title>LFG: a candidate apoptosis regulatory gene family.</title>
        <authorList>
            <person name="Hu L."/>
            <person name="Smith T.F."/>
            <person name="Goldberger G."/>
        </authorList>
    </citation>
    <scope>GENE FAMILY</scope>
    <scope>NOMENCLATURE</scope>
</reference>
<dbReference type="EMBL" id="AK006207">
    <property type="protein sequence ID" value="BAB24458.1"/>
    <property type="molecule type" value="mRNA"/>
</dbReference>
<dbReference type="CCDS" id="CCDS24205.1"/>
<dbReference type="RefSeq" id="NP_080893.1">
    <property type="nucleotide sequence ID" value="NM_026617.3"/>
</dbReference>
<dbReference type="SMR" id="Q9DA39"/>
<dbReference type="BioGRID" id="212733">
    <property type="interactions" value="2"/>
</dbReference>
<dbReference type="FunCoup" id="Q9DA39">
    <property type="interactions" value="1287"/>
</dbReference>
<dbReference type="STRING" id="10090.ENSMUSP00000020446"/>
<dbReference type="PhosphoSitePlus" id="Q9DA39"/>
<dbReference type="PaxDb" id="10090-ENSMUSP00000020446"/>
<dbReference type="ProteomicsDB" id="290022"/>
<dbReference type="DNASU" id="68212"/>
<dbReference type="Ensembl" id="ENSMUST00000020446.11">
    <property type="protein sequence ID" value="ENSMUSP00000020446.5"/>
    <property type="gene ID" value="ENSMUSG00000020225.11"/>
</dbReference>
<dbReference type="GeneID" id="68212"/>
<dbReference type="KEGG" id="mmu:68212"/>
<dbReference type="UCSC" id="uc007hey.1">
    <property type="organism name" value="mouse"/>
</dbReference>
<dbReference type="AGR" id="MGI:1915462"/>
<dbReference type="CTD" id="51643"/>
<dbReference type="MGI" id="MGI:1915462">
    <property type="gene designation" value="Tmbim4"/>
</dbReference>
<dbReference type="VEuPathDB" id="HostDB:ENSMUSG00000020225"/>
<dbReference type="eggNOG" id="KOG2322">
    <property type="taxonomic scope" value="Eukaryota"/>
</dbReference>
<dbReference type="GeneTree" id="ENSGT01050000244940"/>
<dbReference type="HOGENOM" id="CLU_058671_0_2_1"/>
<dbReference type="InParanoid" id="Q9DA39"/>
<dbReference type="OMA" id="FGVMSLY"/>
<dbReference type="OrthoDB" id="7933078at2759"/>
<dbReference type="PhylomeDB" id="Q9DA39"/>
<dbReference type="TreeFam" id="TF321860"/>
<dbReference type="BioGRID-ORCS" id="68212">
    <property type="hits" value="0 hits in 77 CRISPR screens"/>
</dbReference>
<dbReference type="ChiTaRS" id="Tmbim4">
    <property type="organism name" value="mouse"/>
</dbReference>
<dbReference type="PRO" id="PR:Q9DA39"/>
<dbReference type="Proteomes" id="UP000000589">
    <property type="component" value="Chromosome 10"/>
</dbReference>
<dbReference type="RNAct" id="Q9DA39">
    <property type="molecule type" value="protein"/>
</dbReference>
<dbReference type="Bgee" id="ENSMUSG00000020225">
    <property type="expression patterns" value="Expressed in right kidney and 242 other cell types or tissues"/>
</dbReference>
<dbReference type="ExpressionAtlas" id="Q9DA39">
    <property type="expression patterns" value="baseline and differential"/>
</dbReference>
<dbReference type="GO" id="GO:0005789">
    <property type="term" value="C:endoplasmic reticulum membrane"/>
    <property type="evidence" value="ECO:0007669"/>
    <property type="project" value="Ensembl"/>
</dbReference>
<dbReference type="GO" id="GO:0000139">
    <property type="term" value="C:Golgi membrane"/>
    <property type="evidence" value="ECO:0007669"/>
    <property type="project" value="UniProtKB-SubCell"/>
</dbReference>
<dbReference type="GO" id="GO:0005795">
    <property type="term" value="C:Golgi stack"/>
    <property type="evidence" value="ECO:0000250"/>
    <property type="project" value="UniProtKB"/>
</dbReference>
<dbReference type="GO" id="GO:0006915">
    <property type="term" value="P:apoptotic process"/>
    <property type="evidence" value="ECO:0007669"/>
    <property type="project" value="UniProtKB-KW"/>
</dbReference>
<dbReference type="GO" id="GO:0007626">
    <property type="term" value="P:locomotory behavior"/>
    <property type="evidence" value="ECO:0000315"/>
    <property type="project" value="MGI"/>
</dbReference>
<dbReference type="GO" id="GO:0043066">
    <property type="term" value="P:negative regulation of apoptotic process"/>
    <property type="evidence" value="ECO:0000250"/>
    <property type="project" value="UniProtKB"/>
</dbReference>
<dbReference type="GO" id="GO:0043524">
    <property type="term" value="P:negative regulation of neuron apoptotic process"/>
    <property type="evidence" value="ECO:0000315"/>
    <property type="project" value="MGI"/>
</dbReference>
<dbReference type="GO" id="GO:0050848">
    <property type="term" value="P:regulation of calcium-mediated signaling"/>
    <property type="evidence" value="ECO:0000250"/>
    <property type="project" value="UniProtKB"/>
</dbReference>
<dbReference type="CDD" id="cd10429">
    <property type="entry name" value="GAAP_like"/>
    <property type="match status" value="1"/>
</dbReference>
<dbReference type="InterPro" id="IPR006214">
    <property type="entry name" value="Bax_inhibitor_1-related"/>
</dbReference>
<dbReference type="PANTHER" id="PTHR23291">
    <property type="entry name" value="BAX INHIBITOR-RELATED"/>
    <property type="match status" value="1"/>
</dbReference>
<dbReference type="PANTHER" id="PTHR23291:SF50">
    <property type="entry name" value="PROTEIN LIFEGUARD 4"/>
    <property type="match status" value="1"/>
</dbReference>
<dbReference type="Pfam" id="PF01027">
    <property type="entry name" value="Bax1-I"/>
    <property type="match status" value="1"/>
</dbReference>
<organism>
    <name type="scientific">Mus musculus</name>
    <name type="common">Mouse</name>
    <dbReference type="NCBI Taxonomy" id="10090"/>
    <lineage>
        <taxon>Eukaryota</taxon>
        <taxon>Metazoa</taxon>
        <taxon>Chordata</taxon>
        <taxon>Craniata</taxon>
        <taxon>Vertebrata</taxon>
        <taxon>Euteleostomi</taxon>
        <taxon>Mammalia</taxon>
        <taxon>Eutheria</taxon>
        <taxon>Euarchontoglires</taxon>
        <taxon>Glires</taxon>
        <taxon>Rodentia</taxon>
        <taxon>Myomorpha</taxon>
        <taxon>Muroidea</taxon>
        <taxon>Muridae</taxon>
        <taxon>Murinae</taxon>
        <taxon>Mus</taxon>
        <taxon>Mus</taxon>
    </lineage>
</organism>